<organism>
    <name type="scientific">Arabidopsis thaliana</name>
    <name type="common">Mouse-ear cress</name>
    <dbReference type="NCBI Taxonomy" id="3702"/>
    <lineage>
        <taxon>Eukaryota</taxon>
        <taxon>Viridiplantae</taxon>
        <taxon>Streptophyta</taxon>
        <taxon>Embryophyta</taxon>
        <taxon>Tracheophyta</taxon>
        <taxon>Spermatophyta</taxon>
        <taxon>Magnoliopsida</taxon>
        <taxon>eudicotyledons</taxon>
        <taxon>Gunneridae</taxon>
        <taxon>Pentapetalae</taxon>
        <taxon>rosids</taxon>
        <taxon>malvids</taxon>
        <taxon>Brassicales</taxon>
        <taxon>Brassicaceae</taxon>
        <taxon>Camelineae</taxon>
        <taxon>Arabidopsis</taxon>
    </lineage>
</organism>
<sequence length="376" mass="41792">MSWVRFTIEQKDGNFAYPPPFYKDPILSPPSPPPPSSGNRISPAVLFVIVILAVLFFISGLLHLLVRFLIKHPSATASSRSNRFPEISTSDALQRQLQQLFHLNDSGLDQAFIDALPVFHYKEIVGSAGGGGGNGAAQEPFDCAVCLCEFSEKDKLRLLPMCSHAFHLNCIDTWLQSNSTCPLCRGTLFSPGFSMENPMFDFDDIREDEEGVTENGSQKTMEIQEIVVEKGVLPVRLGKFKRLDNVGNGQGQDVVAGGETSSSNLDARRCFSMGSYQYILGNSELKVPFANDRLPRLKPQDKESEQTGNSSSEDNKKINTVAKGESFSVSKIWLWPKKDKFSSDAQRRLPSSSLNVDDLPKLPWMEEHKKLENDGR</sequence>
<protein>
    <recommendedName>
        <fullName>RING-H2 finger protein ATL46</fullName>
        <ecNumber evidence="5">2.3.2.27</ecNumber>
    </recommendedName>
    <alternativeName>
        <fullName evidence="5">RING-type E3 ubiquitin transferase ATL46</fullName>
    </alternativeName>
</protein>
<gene>
    <name type="primary">ATL46</name>
    <name type="ordered locus">At5g40250</name>
    <name type="ORF">MSN9.150</name>
    <name type="ORF">MSN9.16</name>
</gene>
<keyword id="KW-0472">Membrane</keyword>
<keyword id="KW-0479">Metal-binding</keyword>
<keyword id="KW-1185">Reference proteome</keyword>
<keyword id="KW-0808">Transferase</keyword>
<keyword id="KW-0812">Transmembrane</keyword>
<keyword id="KW-1133">Transmembrane helix</keyword>
<keyword id="KW-0833">Ubl conjugation pathway</keyword>
<keyword id="KW-0862">Zinc</keyword>
<keyword id="KW-0863">Zinc-finger</keyword>
<proteinExistence type="evidence at transcript level"/>
<evidence type="ECO:0000250" key="1"/>
<evidence type="ECO:0000255" key="2"/>
<evidence type="ECO:0000255" key="3">
    <source>
        <dbReference type="PROSITE-ProRule" id="PRU00175"/>
    </source>
</evidence>
<evidence type="ECO:0000256" key="4">
    <source>
        <dbReference type="SAM" id="MobiDB-lite"/>
    </source>
</evidence>
<evidence type="ECO:0000305" key="5"/>
<name>ATL46_ARATH</name>
<comment type="catalytic activity">
    <reaction evidence="5">
        <text>S-ubiquitinyl-[E2 ubiquitin-conjugating enzyme]-L-cysteine + [acceptor protein]-L-lysine = [E2 ubiquitin-conjugating enzyme]-L-cysteine + N(6)-ubiquitinyl-[acceptor protein]-L-lysine.</text>
        <dbReference type="EC" id="2.3.2.27"/>
    </reaction>
</comment>
<comment type="pathway">
    <text>Protein modification; protein ubiquitination.</text>
</comment>
<comment type="subcellular location">
    <subcellularLocation>
        <location evidence="5">Membrane</location>
        <topology evidence="5">Single-pass membrane protein</topology>
    </subcellularLocation>
</comment>
<comment type="domain">
    <text evidence="1">The RING-type zinc finger domain mediates binding to an E2 ubiquitin-conjugating enzyme.</text>
</comment>
<comment type="similarity">
    <text evidence="5">Belongs to the RING-type zinc finger family. ATL subfamily.</text>
</comment>
<feature type="chain" id="PRO_0000055812" description="RING-H2 finger protein ATL46">
    <location>
        <begin position="1"/>
        <end position="376"/>
    </location>
</feature>
<feature type="transmembrane region" description="Helical" evidence="2">
    <location>
        <begin position="45"/>
        <end position="65"/>
    </location>
</feature>
<feature type="zinc finger region" description="RING-type; atypical" evidence="3">
    <location>
        <begin position="143"/>
        <end position="185"/>
    </location>
</feature>
<feature type="region of interest" description="Disordered" evidence="4">
    <location>
        <begin position="296"/>
        <end position="320"/>
    </location>
</feature>
<feature type="region of interest" description="Disordered" evidence="4">
    <location>
        <begin position="341"/>
        <end position="376"/>
    </location>
</feature>
<feature type="compositionally biased region" description="Basic and acidic residues" evidence="4">
    <location>
        <begin position="296"/>
        <end position="305"/>
    </location>
</feature>
<feature type="compositionally biased region" description="Basic and acidic residues" evidence="4">
    <location>
        <begin position="358"/>
        <end position="376"/>
    </location>
</feature>
<reference key="1">
    <citation type="journal article" date="1998" name="DNA Res.">
        <title>Structural analysis of Arabidopsis thaliana chromosome 5. V. Sequence features of the regions of 1,381,565 bp covered by twenty one physically assigned P1 and TAC clones.</title>
        <authorList>
            <person name="Kaneko T."/>
            <person name="Kotani H."/>
            <person name="Nakamura Y."/>
            <person name="Sato S."/>
            <person name="Asamizu E."/>
            <person name="Miyajima N."/>
            <person name="Tabata S."/>
        </authorList>
    </citation>
    <scope>NUCLEOTIDE SEQUENCE [LARGE SCALE GENOMIC DNA]</scope>
    <source>
        <strain>cv. Columbia</strain>
    </source>
</reference>
<reference key="2">
    <citation type="journal article" date="2017" name="Plant J.">
        <title>Araport11: a complete reannotation of the Arabidopsis thaliana reference genome.</title>
        <authorList>
            <person name="Cheng C.Y."/>
            <person name="Krishnakumar V."/>
            <person name="Chan A.P."/>
            <person name="Thibaud-Nissen F."/>
            <person name="Schobel S."/>
            <person name="Town C.D."/>
        </authorList>
    </citation>
    <scope>GENOME REANNOTATION</scope>
    <source>
        <strain>cv. Columbia</strain>
    </source>
</reference>
<reference key="3">
    <citation type="submission" date="2004-09" db="EMBL/GenBank/DDBJ databases">
        <title>Large-scale analysis of RIKEN Arabidopsis full-length (RAFL) cDNAs.</title>
        <authorList>
            <person name="Totoki Y."/>
            <person name="Seki M."/>
            <person name="Ishida J."/>
            <person name="Nakajima M."/>
            <person name="Enju A."/>
            <person name="Kamiya A."/>
            <person name="Narusaka M."/>
            <person name="Shin-i T."/>
            <person name="Nakagawa M."/>
            <person name="Sakamoto N."/>
            <person name="Oishi K."/>
            <person name="Kohara Y."/>
            <person name="Kobayashi M."/>
            <person name="Toyoda A."/>
            <person name="Sakaki Y."/>
            <person name="Sakurai T."/>
            <person name="Iida K."/>
            <person name="Akiyama K."/>
            <person name="Satou M."/>
            <person name="Toyoda T."/>
            <person name="Konagaya A."/>
            <person name="Carninci P."/>
            <person name="Kawai J."/>
            <person name="Hayashizaki Y."/>
            <person name="Shinozaki K."/>
        </authorList>
    </citation>
    <scope>NUCLEOTIDE SEQUENCE [LARGE SCALE MRNA]</scope>
    <source>
        <strain>cv. Columbia</strain>
    </source>
</reference>
<reference key="4">
    <citation type="journal article" date="2002" name="Genome Biol.">
        <title>Evaluation and classification of RING-finger domains encoded by the Arabidopsis genome.</title>
        <authorList>
            <person name="Kosarev P."/>
            <person name="Mayer K.F.X."/>
            <person name="Hardtke C.S."/>
        </authorList>
    </citation>
    <scope>GENE FAMILY ORGANIZATION</scope>
</reference>
<reference key="5">
    <citation type="journal article" date="2006" name="J. Mol. Evol.">
        <title>The ATL gene family from Arabidopsis thaliana and Oryza sativa comprises a large number of putative ubiquitin ligases of the RING-H2 type.</title>
        <authorList>
            <person name="Serrano M."/>
            <person name="Parra S."/>
            <person name="Alcaraz L.D."/>
            <person name="Guzman P."/>
        </authorList>
    </citation>
    <scope>NOMENCLATURE</scope>
    <scope>GENE FAMILY ORGANIZATION</scope>
</reference>
<accession>Q9FL07</accession>
<dbReference type="EC" id="2.3.2.27" evidence="5"/>
<dbReference type="EMBL" id="AB010699">
    <property type="protein sequence ID" value="BAB10906.1"/>
    <property type="molecule type" value="Genomic_DNA"/>
</dbReference>
<dbReference type="EMBL" id="CP002688">
    <property type="protein sequence ID" value="AED94525.1"/>
    <property type="molecule type" value="Genomic_DNA"/>
</dbReference>
<dbReference type="EMBL" id="AK176313">
    <property type="protein sequence ID" value="BAD44076.1"/>
    <property type="molecule type" value="mRNA"/>
</dbReference>
<dbReference type="RefSeq" id="NP_198841.1">
    <property type="nucleotide sequence ID" value="NM_123389.4"/>
</dbReference>
<dbReference type="SMR" id="Q9FL07"/>
<dbReference type="FunCoup" id="Q9FL07">
    <property type="interactions" value="1742"/>
</dbReference>
<dbReference type="STRING" id="3702.Q9FL07"/>
<dbReference type="iPTMnet" id="Q9FL07"/>
<dbReference type="PaxDb" id="3702-AT5G40250.1"/>
<dbReference type="ProteomicsDB" id="246762"/>
<dbReference type="EnsemblPlants" id="AT5G40250.1">
    <property type="protein sequence ID" value="AT5G40250.1"/>
    <property type="gene ID" value="AT5G40250"/>
</dbReference>
<dbReference type="GeneID" id="834023"/>
<dbReference type="Gramene" id="AT5G40250.1">
    <property type="protein sequence ID" value="AT5G40250.1"/>
    <property type="gene ID" value="AT5G40250"/>
</dbReference>
<dbReference type="KEGG" id="ath:AT5G40250"/>
<dbReference type="Araport" id="AT5G40250"/>
<dbReference type="TAIR" id="AT5G40250">
    <property type="gene designation" value="ATL46"/>
</dbReference>
<dbReference type="eggNOG" id="KOG0800">
    <property type="taxonomic scope" value="Eukaryota"/>
</dbReference>
<dbReference type="HOGENOM" id="CLU_034332_1_0_1"/>
<dbReference type="InParanoid" id="Q9FL07"/>
<dbReference type="OMA" id="HLKMAWV"/>
<dbReference type="PhylomeDB" id="Q9FL07"/>
<dbReference type="UniPathway" id="UPA00143"/>
<dbReference type="PRO" id="PR:Q9FL07"/>
<dbReference type="Proteomes" id="UP000006548">
    <property type="component" value="Chromosome 5"/>
</dbReference>
<dbReference type="ExpressionAtlas" id="Q9FL07">
    <property type="expression patterns" value="baseline and differential"/>
</dbReference>
<dbReference type="GO" id="GO:0016020">
    <property type="term" value="C:membrane"/>
    <property type="evidence" value="ECO:0007669"/>
    <property type="project" value="UniProtKB-SubCell"/>
</dbReference>
<dbReference type="GO" id="GO:0016740">
    <property type="term" value="F:transferase activity"/>
    <property type="evidence" value="ECO:0007669"/>
    <property type="project" value="UniProtKB-KW"/>
</dbReference>
<dbReference type="GO" id="GO:0008270">
    <property type="term" value="F:zinc ion binding"/>
    <property type="evidence" value="ECO:0007669"/>
    <property type="project" value="UniProtKB-KW"/>
</dbReference>
<dbReference type="GO" id="GO:0016567">
    <property type="term" value="P:protein ubiquitination"/>
    <property type="evidence" value="ECO:0007669"/>
    <property type="project" value="UniProtKB-UniPathway"/>
</dbReference>
<dbReference type="CDD" id="cd16461">
    <property type="entry name" value="RING-H2_EL5-like"/>
    <property type="match status" value="1"/>
</dbReference>
<dbReference type="FunFam" id="3.30.40.10:FF:000231">
    <property type="entry name" value="RING-H2 finger protein ATL46"/>
    <property type="match status" value="1"/>
</dbReference>
<dbReference type="Gene3D" id="3.30.40.10">
    <property type="entry name" value="Zinc/RING finger domain, C3HC4 (zinc finger)"/>
    <property type="match status" value="1"/>
</dbReference>
<dbReference type="InterPro" id="IPR001841">
    <property type="entry name" value="Znf_RING"/>
</dbReference>
<dbReference type="InterPro" id="IPR013083">
    <property type="entry name" value="Znf_RING/FYVE/PHD"/>
</dbReference>
<dbReference type="PANTHER" id="PTHR45768">
    <property type="entry name" value="E3 UBIQUITIN-PROTEIN LIGASE RNF13-LIKE"/>
    <property type="match status" value="1"/>
</dbReference>
<dbReference type="PANTHER" id="PTHR45768:SF78">
    <property type="entry name" value="RING-H2 FINGER PROTEIN ATL46"/>
    <property type="match status" value="1"/>
</dbReference>
<dbReference type="Pfam" id="PF13639">
    <property type="entry name" value="zf-RING_2"/>
    <property type="match status" value="1"/>
</dbReference>
<dbReference type="SMART" id="SM00184">
    <property type="entry name" value="RING"/>
    <property type="match status" value="1"/>
</dbReference>
<dbReference type="SUPFAM" id="SSF57850">
    <property type="entry name" value="RING/U-box"/>
    <property type="match status" value="1"/>
</dbReference>
<dbReference type="PROSITE" id="PS50089">
    <property type="entry name" value="ZF_RING_2"/>
    <property type="match status" value="1"/>
</dbReference>